<keyword id="KW-0997">Cell inner membrane</keyword>
<keyword id="KW-1003">Cell membrane</keyword>
<keyword id="KW-0472">Membrane</keyword>
<keyword id="KW-1185">Reference proteome</keyword>
<keyword id="KW-0677">Repeat</keyword>
<keyword id="KW-0812">Transmembrane</keyword>
<keyword id="KW-1133">Transmembrane helix</keyword>
<keyword id="KW-0813">Transport</keyword>
<comment type="subcellular location">
    <subcellularLocation>
        <location evidence="3">Cell inner membrane</location>
        <topology evidence="3">Multi-pass membrane protein</topology>
    </subcellularLocation>
</comment>
<comment type="similarity">
    <text evidence="3">Belongs to the CitM (TC 2.A.11) transporter family.</text>
</comment>
<sequence>MNGELIWVLSLLAVAIVLFATGRVRMDAVALFVIVAFALSGTLTVPEVFSGFSDPNVVLIAALFIIGDGLVRTGVATVMGTWLVKVAGNSEIKMLVLLMLTVAGLGAFMSSTGVVAIFIPVVLSVAMRMQTSPSRLMMPLSFAGLISGMMTLVATPPNLVVNSELLREGYHGFSFFSVTPIGLVVLVLGILYMLVMRFMLKGDTQTPQREGWTRRTFRDLIREYRLTGRARRLAIRPGSPMIGQRLDDLKLRERYGANVIGVERWRRFRRVIVNVNGVSEFRARDVLLIDMSAADVDLRQFCSEQLLEPMVLRGEYFSDQALDVGMAEISLIPESELIGKSVREIGFRTRYGLNVVGLKRNGVALEGSLADEPLLLGDIILVVGNWKLIGMLAKQGRDFVALNLPEEVSEASPAHSQAPHAIFCLVLMVALMLTDEIPNPVAAIIACLLMGKFRCIDAESAYKSIHWPSIILIVGMMPFAVALQKTGGVALAVKGLMDIGGGYGPHMMLGCLFVLSAVIGLFISNTATAVLMAPIALAAAKTMGVSPYPFAMVVAMAASAAFMTPVSSPVNTLVLGPGNYSFSDFVKLGVPFTIIVMAVCVVMIPMLFPF</sequence>
<accession>P0AFU2</accession>
<accession>P76935</accession>
<accession>P77741</accession>
<proteinExistence type="inferred from homology"/>
<reference key="1">
    <citation type="journal article" date="1997" name="DNA Res.">
        <title>Construction of a contiguous 874-kb sequence of the Escherichia coli-K12 genome corresponding to 50.0-68.8 min on the linkage map and analysis of its sequence features.</title>
        <authorList>
            <person name="Yamamoto Y."/>
            <person name="Aiba H."/>
            <person name="Baba T."/>
            <person name="Hayashi K."/>
            <person name="Inada T."/>
            <person name="Isono K."/>
            <person name="Itoh T."/>
            <person name="Kimura S."/>
            <person name="Kitagawa M."/>
            <person name="Makino K."/>
            <person name="Miki T."/>
            <person name="Mitsuhashi N."/>
            <person name="Mizobuchi K."/>
            <person name="Mori H."/>
            <person name="Nakade S."/>
            <person name="Nakamura Y."/>
            <person name="Nashimoto H."/>
            <person name="Oshima T."/>
            <person name="Oyama S."/>
            <person name="Saito N."/>
            <person name="Sampei G."/>
            <person name="Satoh Y."/>
            <person name="Sivasundaram S."/>
            <person name="Tagami H."/>
            <person name="Takahashi H."/>
            <person name="Takeda J."/>
            <person name="Takemoto K."/>
            <person name="Uehara K."/>
            <person name="Wada C."/>
            <person name="Yamagata S."/>
            <person name="Horiuchi T."/>
        </authorList>
    </citation>
    <scope>NUCLEOTIDE SEQUENCE [LARGE SCALE GENOMIC DNA]</scope>
    <source>
        <strain>K12 / W3110 / ATCC 27325 / DSM 5911</strain>
    </source>
</reference>
<reference key="2">
    <citation type="journal article" date="1997" name="Science">
        <title>The complete genome sequence of Escherichia coli K-12.</title>
        <authorList>
            <person name="Blattner F.R."/>
            <person name="Plunkett G. III"/>
            <person name="Bloch C.A."/>
            <person name="Perna N.T."/>
            <person name="Burland V."/>
            <person name="Riley M."/>
            <person name="Collado-Vides J."/>
            <person name="Glasner J.D."/>
            <person name="Rode C.K."/>
            <person name="Mayhew G.F."/>
            <person name="Gregor J."/>
            <person name="Davis N.W."/>
            <person name="Kirkpatrick H.A."/>
            <person name="Goeden M.A."/>
            <person name="Rose D.J."/>
            <person name="Mau B."/>
            <person name="Shao Y."/>
        </authorList>
    </citation>
    <scope>NUCLEOTIDE SEQUENCE [LARGE SCALE GENOMIC DNA]</scope>
    <source>
        <strain>K12 / MG1655 / ATCC 47076</strain>
    </source>
</reference>
<reference key="3">
    <citation type="journal article" date="2006" name="Mol. Syst. Biol.">
        <title>Highly accurate genome sequences of Escherichia coli K-12 strains MG1655 and W3110.</title>
        <authorList>
            <person name="Hayashi K."/>
            <person name="Morooka N."/>
            <person name="Yamamoto Y."/>
            <person name="Fujita K."/>
            <person name="Isono K."/>
            <person name="Choi S."/>
            <person name="Ohtsubo E."/>
            <person name="Baba T."/>
            <person name="Wanner B.L."/>
            <person name="Mori H."/>
            <person name="Horiuchi T."/>
        </authorList>
    </citation>
    <scope>NUCLEOTIDE SEQUENCE [LARGE SCALE GENOMIC DNA]</scope>
    <source>
        <strain>K12 / W3110 / ATCC 27325 / DSM 5911</strain>
    </source>
</reference>
<name>YFBS_ECOLI</name>
<organism>
    <name type="scientific">Escherichia coli (strain K12)</name>
    <dbReference type="NCBI Taxonomy" id="83333"/>
    <lineage>
        <taxon>Bacteria</taxon>
        <taxon>Pseudomonadati</taxon>
        <taxon>Pseudomonadota</taxon>
        <taxon>Gammaproteobacteria</taxon>
        <taxon>Enterobacterales</taxon>
        <taxon>Enterobacteriaceae</taxon>
        <taxon>Escherichia</taxon>
    </lineage>
</organism>
<dbReference type="EMBL" id="U00096">
    <property type="protein sequence ID" value="AAC75352.1"/>
    <property type="molecule type" value="Genomic_DNA"/>
</dbReference>
<dbReference type="EMBL" id="AP009048">
    <property type="protein sequence ID" value="BAA16128.1"/>
    <property type="molecule type" value="Genomic_DNA"/>
</dbReference>
<dbReference type="PIR" id="B65001">
    <property type="entry name" value="B65001"/>
</dbReference>
<dbReference type="RefSeq" id="NP_416795.1">
    <property type="nucleotide sequence ID" value="NC_000913.3"/>
</dbReference>
<dbReference type="RefSeq" id="WP_001012899.1">
    <property type="nucleotide sequence ID" value="NZ_STEB01000008.1"/>
</dbReference>
<dbReference type="BioGRID" id="4262968">
    <property type="interactions" value="215"/>
</dbReference>
<dbReference type="DIP" id="DIP-48033N"/>
<dbReference type="FunCoup" id="P0AFU2">
    <property type="interactions" value="86"/>
</dbReference>
<dbReference type="IntAct" id="P0AFU2">
    <property type="interactions" value="1"/>
</dbReference>
<dbReference type="STRING" id="511145.b2292"/>
<dbReference type="TCDB" id="2.A.47.4.8">
    <property type="family name" value="the divalent anion:na(+) symporter (dass) family"/>
</dbReference>
<dbReference type="jPOST" id="P0AFU2"/>
<dbReference type="PaxDb" id="511145-b2292"/>
<dbReference type="EnsemblBacteria" id="AAC75352">
    <property type="protein sequence ID" value="AAC75352"/>
    <property type="gene ID" value="b2292"/>
</dbReference>
<dbReference type="GeneID" id="946766"/>
<dbReference type="KEGG" id="ecj:JW2289"/>
<dbReference type="KEGG" id="eco:b2292"/>
<dbReference type="KEGG" id="ecoc:C3026_12785"/>
<dbReference type="PATRIC" id="fig|1411691.4.peg.4443"/>
<dbReference type="EchoBASE" id="EB3856"/>
<dbReference type="eggNOG" id="COG0471">
    <property type="taxonomic scope" value="Bacteria"/>
</dbReference>
<dbReference type="eggNOG" id="COG0490">
    <property type="taxonomic scope" value="Bacteria"/>
</dbReference>
<dbReference type="HOGENOM" id="CLU_005170_6_1_6"/>
<dbReference type="InParanoid" id="P0AFU2"/>
<dbReference type="OMA" id="CLFVMCA"/>
<dbReference type="OrthoDB" id="9809303at2"/>
<dbReference type="PhylomeDB" id="P0AFU2"/>
<dbReference type="BioCyc" id="EcoCyc:G7186-MONOMER"/>
<dbReference type="PRO" id="PR:P0AFU2"/>
<dbReference type="Proteomes" id="UP000000625">
    <property type="component" value="Chromosome"/>
</dbReference>
<dbReference type="GO" id="GO:0005886">
    <property type="term" value="C:plasma membrane"/>
    <property type="evidence" value="ECO:0000314"/>
    <property type="project" value="EcoCyc"/>
</dbReference>
<dbReference type="GO" id="GO:0008324">
    <property type="term" value="F:monoatomic cation transmembrane transporter activity"/>
    <property type="evidence" value="ECO:0007669"/>
    <property type="project" value="InterPro"/>
</dbReference>
<dbReference type="GO" id="GO:0006813">
    <property type="term" value="P:potassium ion transport"/>
    <property type="evidence" value="ECO:0007669"/>
    <property type="project" value="InterPro"/>
</dbReference>
<dbReference type="CDD" id="cd01115">
    <property type="entry name" value="SLC13_permease"/>
    <property type="match status" value="1"/>
</dbReference>
<dbReference type="FunFam" id="3.30.70.1450:FF:000005">
    <property type="entry name" value="Citrate transporter protein"/>
    <property type="match status" value="1"/>
</dbReference>
<dbReference type="FunFam" id="3.30.70.1450:FF:000006">
    <property type="entry name" value="Citrate transporter protein"/>
    <property type="match status" value="1"/>
</dbReference>
<dbReference type="Gene3D" id="3.30.70.1450">
    <property type="entry name" value="Regulator of K+ conductance, C-terminal domain"/>
    <property type="match status" value="2"/>
</dbReference>
<dbReference type="InterPro" id="IPR004680">
    <property type="entry name" value="Cit_transptr-like_dom"/>
</dbReference>
<dbReference type="InterPro" id="IPR051679">
    <property type="entry name" value="DASS-Related_Transporters"/>
</dbReference>
<dbReference type="InterPro" id="IPR031312">
    <property type="entry name" value="Na/sul_symport_CS"/>
</dbReference>
<dbReference type="InterPro" id="IPR006037">
    <property type="entry name" value="RCK_C"/>
</dbReference>
<dbReference type="InterPro" id="IPR036721">
    <property type="entry name" value="RCK_C_sf"/>
</dbReference>
<dbReference type="PANTHER" id="PTHR43652">
    <property type="entry name" value="BASIC AMINO ACID ANTIPORTER YFCC-RELATED"/>
    <property type="match status" value="1"/>
</dbReference>
<dbReference type="PANTHER" id="PTHR43652:SF1">
    <property type="entry name" value="RESPONSE REGULATOR"/>
    <property type="match status" value="1"/>
</dbReference>
<dbReference type="Pfam" id="PF03600">
    <property type="entry name" value="CitMHS"/>
    <property type="match status" value="1"/>
</dbReference>
<dbReference type="Pfam" id="PF02080">
    <property type="entry name" value="TrkA_C"/>
    <property type="match status" value="2"/>
</dbReference>
<dbReference type="SUPFAM" id="SSF116726">
    <property type="entry name" value="TrkA C-terminal domain-like"/>
    <property type="match status" value="2"/>
</dbReference>
<dbReference type="PROSITE" id="PS01271">
    <property type="entry name" value="NA_SULFATE"/>
    <property type="match status" value="1"/>
</dbReference>
<dbReference type="PROSITE" id="PS51202">
    <property type="entry name" value="RCK_C"/>
    <property type="match status" value="2"/>
</dbReference>
<gene>
    <name type="primary">yfbS</name>
    <name type="ordered locus">b2292</name>
    <name type="ordered locus">JW2289</name>
</gene>
<feature type="chain" id="PRO_0000172503" description="Uncharacterized transporter YfbS">
    <location>
        <begin position="1"/>
        <end position="610"/>
    </location>
</feature>
<feature type="transmembrane region" description="Helical" evidence="1">
    <location>
        <begin position="1"/>
        <end position="21"/>
    </location>
</feature>
<feature type="transmembrane region" description="Helical" evidence="1">
    <location>
        <begin position="29"/>
        <end position="49"/>
    </location>
</feature>
<feature type="transmembrane region" description="Helical" evidence="1">
    <location>
        <begin position="51"/>
        <end position="71"/>
    </location>
</feature>
<feature type="transmembrane region" description="Helical" evidence="1">
    <location>
        <begin position="78"/>
        <end position="98"/>
    </location>
</feature>
<feature type="transmembrane region" description="Helical" evidence="1">
    <location>
        <begin position="102"/>
        <end position="122"/>
    </location>
</feature>
<feature type="transmembrane region" description="Helical" evidence="1">
    <location>
        <begin position="136"/>
        <end position="156"/>
    </location>
</feature>
<feature type="transmembrane region" description="Helical" evidence="1">
    <location>
        <begin position="175"/>
        <end position="195"/>
    </location>
</feature>
<feature type="transmembrane region" description="Helical" evidence="1">
    <location>
        <begin position="373"/>
        <end position="393"/>
    </location>
</feature>
<feature type="transmembrane region" description="Helical" evidence="1">
    <location>
        <begin position="425"/>
        <end position="445"/>
    </location>
</feature>
<feature type="transmembrane region" description="Helical" evidence="1">
    <location>
        <begin position="464"/>
        <end position="484"/>
    </location>
</feature>
<feature type="transmembrane region" description="Helical" evidence="1">
    <location>
        <begin position="503"/>
        <end position="523"/>
    </location>
</feature>
<feature type="transmembrane region" description="Helical" evidence="1">
    <location>
        <begin position="543"/>
        <end position="563"/>
    </location>
</feature>
<feature type="transmembrane region" description="Helical" evidence="1">
    <location>
        <begin position="588"/>
        <end position="608"/>
    </location>
</feature>
<feature type="domain" description="RCK C-terminal 1" evidence="2">
    <location>
        <begin position="218"/>
        <end position="307"/>
    </location>
</feature>
<feature type="domain" description="RCK C-terminal 2" evidence="2">
    <location>
        <begin position="314"/>
        <end position="398"/>
    </location>
</feature>
<evidence type="ECO:0000255" key="1"/>
<evidence type="ECO:0000255" key="2">
    <source>
        <dbReference type="PROSITE-ProRule" id="PRU00544"/>
    </source>
</evidence>
<evidence type="ECO:0000305" key="3"/>
<protein>
    <recommendedName>
        <fullName>Uncharacterized transporter YfbS</fullName>
    </recommendedName>
</protein>